<reference key="1">
    <citation type="journal article" date="2007" name="PLoS ONE">
        <title>Analysis of the neurotoxin complex genes in Clostridium botulinum A1-A4 and B1 strains: BoNT/A3, /Ba4 and /B1 clusters are located within plasmids.</title>
        <authorList>
            <person name="Smith T.J."/>
            <person name="Hill K.K."/>
            <person name="Foley B.T."/>
            <person name="Detter J.C."/>
            <person name="Munk A.C."/>
            <person name="Bruce D.C."/>
            <person name="Doggett N.A."/>
            <person name="Smith L.A."/>
            <person name="Marks J.D."/>
            <person name="Xie G."/>
            <person name="Brettin T.S."/>
        </authorList>
    </citation>
    <scope>NUCLEOTIDE SEQUENCE [LARGE SCALE GENOMIC DNA]</scope>
    <source>
        <strain>Loch Maree / Type A3</strain>
    </source>
</reference>
<feature type="chain" id="PRO_1000098054" description="Serine--tRNA ligase">
    <location>
        <begin position="1"/>
        <end position="426"/>
    </location>
</feature>
<feature type="binding site" evidence="1">
    <location>
        <begin position="233"/>
        <end position="235"/>
    </location>
    <ligand>
        <name>L-serine</name>
        <dbReference type="ChEBI" id="CHEBI:33384"/>
    </ligand>
</feature>
<feature type="binding site" evidence="1">
    <location>
        <begin position="264"/>
        <end position="266"/>
    </location>
    <ligand>
        <name>ATP</name>
        <dbReference type="ChEBI" id="CHEBI:30616"/>
    </ligand>
</feature>
<feature type="binding site" evidence="1">
    <location>
        <position position="287"/>
    </location>
    <ligand>
        <name>L-serine</name>
        <dbReference type="ChEBI" id="CHEBI:33384"/>
    </ligand>
</feature>
<feature type="binding site" evidence="1">
    <location>
        <begin position="351"/>
        <end position="354"/>
    </location>
    <ligand>
        <name>ATP</name>
        <dbReference type="ChEBI" id="CHEBI:30616"/>
    </ligand>
</feature>
<feature type="binding site" evidence="1">
    <location>
        <position position="387"/>
    </location>
    <ligand>
        <name>L-serine</name>
        <dbReference type="ChEBI" id="CHEBI:33384"/>
    </ligand>
</feature>
<gene>
    <name evidence="1" type="primary">serS</name>
    <name type="ordered locus">CLK_3156</name>
</gene>
<protein>
    <recommendedName>
        <fullName evidence="1">Serine--tRNA ligase</fullName>
        <ecNumber evidence="1">6.1.1.11</ecNumber>
    </recommendedName>
    <alternativeName>
        <fullName evidence="1">Seryl-tRNA synthetase</fullName>
        <shortName evidence="1">SerRS</shortName>
    </alternativeName>
    <alternativeName>
        <fullName evidence="1">Seryl-tRNA(Ser/Sec) synthetase</fullName>
    </alternativeName>
</protein>
<keyword id="KW-0030">Aminoacyl-tRNA synthetase</keyword>
<keyword id="KW-0067">ATP-binding</keyword>
<keyword id="KW-0963">Cytoplasm</keyword>
<keyword id="KW-0436">Ligase</keyword>
<keyword id="KW-0547">Nucleotide-binding</keyword>
<keyword id="KW-0648">Protein biosynthesis</keyword>
<dbReference type="EC" id="6.1.1.11" evidence="1"/>
<dbReference type="EMBL" id="CP000962">
    <property type="protein sequence ID" value="ACA55771.1"/>
    <property type="molecule type" value="Genomic_DNA"/>
</dbReference>
<dbReference type="RefSeq" id="WP_012343714.1">
    <property type="nucleotide sequence ID" value="NC_010520.1"/>
</dbReference>
<dbReference type="SMR" id="B1L1M0"/>
<dbReference type="KEGG" id="cbl:CLK_3156"/>
<dbReference type="HOGENOM" id="CLU_023797_1_1_9"/>
<dbReference type="UniPathway" id="UPA00906">
    <property type="reaction ID" value="UER00895"/>
</dbReference>
<dbReference type="GO" id="GO:0005737">
    <property type="term" value="C:cytoplasm"/>
    <property type="evidence" value="ECO:0007669"/>
    <property type="project" value="UniProtKB-SubCell"/>
</dbReference>
<dbReference type="GO" id="GO:0005524">
    <property type="term" value="F:ATP binding"/>
    <property type="evidence" value="ECO:0007669"/>
    <property type="project" value="UniProtKB-UniRule"/>
</dbReference>
<dbReference type="GO" id="GO:0140096">
    <property type="term" value="F:catalytic activity, acting on a protein"/>
    <property type="evidence" value="ECO:0007669"/>
    <property type="project" value="UniProtKB-ARBA"/>
</dbReference>
<dbReference type="GO" id="GO:0004828">
    <property type="term" value="F:serine-tRNA ligase activity"/>
    <property type="evidence" value="ECO:0007669"/>
    <property type="project" value="UniProtKB-UniRule"/>
</dbReference>
<dbReference type="GO" id="GO:0016740">
    <property type="term" value="F:transferase activity"/>
    <property type="evidence" value="ECO:0007669"/>
    <property type="project" value="UniProtKB-ARBA"/>
</dbReference>
<dbReference type="GO" id="GO:0016260">
    <property type="term" value="P:selenocysteine biosynthetic process"/>
    <property type="evidence" value="ECO:0007669"/>
    <property type="project" value="UniProtKB-UniRule"/>
</dbReference>
<dbReference type="GO" id="GO:0006434">
    <property type="term" value="P:seryl-tRNA aminoacylation"/>
    <property type="evidence" value="ECO:0007669"/>
    <property type="project" value="UniProtKB-UniRule"/>
</dbReference>
<dbReference type="CDD" id="cd00770">
    <property type="entry name" value="SerRS_core"/>
    <property type="match status" value="1"/>
</dbReference>
<dbReference type="Gene3D" id="3.30.930.10">
    <property type="entry name" value="Bira Bifunctional Protein, Domain 2"/>
    <property type="match status" value="1"/>
</dbReference>
<dbReference type="Gene3D" id="1.10.287.40">
    <property type="entry name" value="Serine-tRNA synthetase, tRNA binding domain"/>
    <property type="match status" value="1"/>
</dbReference>
<dbReference type="HAMAP" id="MF_00176">
    <property type="entry name" value="Ser_tRNA_synth_type1"/>
    <property type="match status" value="1"/>
</dbReference>
<dbReference type="InterPro" id="IPR002314">
    <property type="entry name" value="aa-tRNA-synt_IIb"/>
</dbReference>
<dbReference type="InterPro" id="IPR006195">
    <property type="entry name" value="aa-tRNA-synth_II"/>
</dbReference>
<dbReference type="InterPro" id="IPR045864">
    <property type="entry name" value="aa-tRNA-synth_II/BPL/LPL"/>
</dbReference>
<dbReference type="InterPro" id="IPR002317">
    <property type="entry name" value="Ser-tRNA-ligase_type_1"/>
</dbReference>
<dbReference type="InterPro" id="IPR015866">
    <property type="entry name" value="Ser-tRNA-synth_1_N"/>
</dbReference>
<dbReference type="InterPro" id="IPR042103">
    <property type="entry name" value="SerRS_1_N_sf"/>
</dbReference>
<dbReference type="InterPro" id="IPR033729">
    <property type="entry name" value="SerRS_core"/>
</dbReference>
<dbReference type="InterPro" id="IPR010978">
    <property type="entry name" value="tRNA-bd_arm"/>
</dbReference>
<dbReference type="NCBIfam" id="TIGR00414">
    <property type="entry name" value="serS"/>
    <property type="match status" value="1"/>
</dbReference>
<dbReference type="PANTHER" id="PTHR43697:SF1">
    <property type="entry name" value="SERINE--TRNA LIGASE"/>
    <property type="match status" value="1"/>
</dbReference>
<dbReference type="PANTHER" id="PTHR43697">
    <property type="entry name" value="SERYL-TRNA SYNTHETASE"/>
    <property type="match status" value="1"/>
</dbReference>
<dbReference type="Pfam" id="PF02403">
    <property type="entry name" value="Seryl_tRNA_N"/>
    <property type="match status" value="1"/>
</dbReference>
<dbReference type="Pfam" id="PF00587">
    <property type="entry name" value="tRNA-synt_2b"/>
    <property type="match status" value="1"/>
</dbReference>
<dbReference type="PIRSF" id="PIRSF001529">
    <property type="entry name" value="Ser-tRNA-synth_IIa"/>
    <property type="match status" value="1"/>
</dbReference>
<dbReference type="PRINTS" id="PR00981">
    <property type="entry name" value="TRNASYNTHSER"/>
</dbReference>
<dbReference type="SUPFAM" id="SSF55681">
    <property type="entry name" value="Class II aaRS and biotin synthetases"/>
    <property type="match status" value="1"/>
</dbReference>
<dbReference type="SUPFAM" id="SSF46589">
    <property type="entry name" value="tRNA-binding arm"/>
    <property type="match status" value="1"/>
</dbReference>
<dbReference type="PROSITE" id="PS50862">
    <property type="entry name" value="AA_TRNA_LIGASE_II"/>
    <property type="match status" value="1"/>
</dbReference>
<name>SYS_CLOBM</name>
<accession>B1L1M0</accession>
<evidence type="ECO:0000255" key="1">
    <source>
        <dbReference type="HAMAP-Rule" id="MF_00176"/>
    </source>
</evidence>
<sequence length="426" mass="48749">MLDLKRIRNNSNEIKEALNNRGEKFDVTVIDEVLKLDEERRNILVKVEVLKSKRNQVSSEVPKLKKEGKDVSNIVAEMKNLSEEIKGFDTTLAKIDEKIQYIMLRIPNIPNPQVPDGETDEDNIEIRNWSEPTKFDFEPKAHWDIGSNLNILDFERAGKVTGSRFTFYKGLGARLERSLISYFLDTHTEKHGYTEILPPYMVNRTSMIGTGQLPKFEEDAFKISEDDYFLIPTAEVPVTNLYRDEILKGDELPLKHVAYSACFRSEAGSAGRDTRGLVRQHQFNKVELVKFTKPEQSYEELEKLTNDAETVLKELGIPYRVVRICKGDLGFTAALKYDLEVWMPSYNRYVEISSCSNFEDFQARRANIRYKEDAKAKPQYVHTLNGSGVAIGRTVAAILENYQNEDGSVTIPEVLRPYMGGKEAIK</sequence>
<comment type="function">
    <text evidence="1">Catalyzes the attachment of serine to tRNA(Ser). Is also able to aminoacylate tRNA(Sec) with serine, to form the misacylated tRNA L-seryl-tRNA(Sec), which will be further converted into selenocysteinyl-tRNA(Sec).</text>
</comment>
<comment type="catalytic activity">
    <reaction evidence="1">
        <text>tRNA(Ser) + L-serine + ATP = L-seryl-tRNA(Ser) + AMP + diphosphate + H(+)</text>
        <dbReference type="Rhea" id="RHEA:12292"/>
        <dbReference type="Rhea" id="RHEA-COMP:9669"/>
        <dbReference type="Rhea" id="RHEA-COMP:9703"/>
        <dbReference type="ChEBI" id="CHEBI:15378"/>
        <dbReference type="ChEBI" id="CHEBI:30616"/>
        <dbReference type="ChEBI" id="CHEBI:33019"/>
        <dbReference type="ChEBI" id="CHEBI:33384"/>
        <dbReference type="ChEBI" id="CHEBI:78442"/>
        <dbReference type="ChEBI" id="CHEBI:78533"/>
        <dbReference type="ChEBI" id="CHEBI:456215"/>
        <dbReference type="EC" id="6.1.1.11"/>
    </reaction>
</comment>
<comment type="catalytic activity">
    <reaction evidence="1">
        <text>tRNA(Sec) + L-serine + ATP = L-seryl-tRNA(Sec) + AMP + diphosphate + H(+)</text>
        <dbReference type="Rhea" id="RHEA:42580"/>
        <dbReference type="Rhea" id="RHEA-COMP:9742"/>
        <dbReference type="Rhea" id="RHEA-COMP:10128"/>
        <dbReference type="ChEBI" id="CHEBI:15378"/>
        <dbReference type="ChEBI" id="CHEBI:30616"/>
        <dbReference type="ChEBI" id="CHEBI:33019"/>
        <dbReference type="ChEBI" id="CHEBI:33384"/>
        <dbReference type="ChEBI" id="CHEBI:78442"/>
        <dbReference type="ChEBI" id="CHEBI:78533"/>
        <dbReference type="ChEBI" id="CHEBI:456215"/>
        <dbReference type="EC" id="6.1.1.11"/>
    </reaction>
</comment>
<comment type="pathway">
    <text evidence="1">Aminoacyl-tRNA biosynthesis; selenocysteinyl-tRNA(Sec) biosynthesis; L-seryl-tRNA(Sec) from L-serine and tRNA(Sec): step 1/1.</text>
</comment>
<comment type="subunit">
    <text evidence="1">Homodimer. The tRNA molecule binds across the dimer.</text>
</comment>
<comment type="subcellular location">
    <subcellularLocation>
        <location evidence="1">Cytoplasm</location>
    </subcellularLocation>
</comment>
<comment type="domain">
    <text evidence="1">Consists of two distinct domains, a catalytic core and a N-terminal extension that is involved in tRNA binding.</text>
</comment>
<comment type="similarity">
    <text evidence="1">Belongs to the class-II aminoacyl-tRNA synthetase family. Type-1 seryl-tRNA synthetase subfamily.</text>
</comment>
<organism>
    <name type="scientific">Clostridium botulinum (strain Loch Maree / Type A3)</name>
    <dbReference type="NCBI Taxonomy" id="498214"/>
    <lineage>
        <taxon>Bacteria</taxon>
        <taxon>Bacillati</taxon>
        <taxon>Bacillota</taxon>
        <taxon>Clostridia</taxon>
        <taxon>Eubacteriales</taxon>
        <taxon>Clostridiaceae</taxon>
        <taxon>Clostridium</taxon>
    </lineage>
</organism>
<proteinExistence type="inferred from homology"/>